<keyword id="KW-0002">3D-structure</keyword>
<keyword id="KW-0007">Acetylation</keyword>
<keyword id="KW-0025">Alternative splicing</keyword>
<keyword id="KW-0067">ATP-binding</keyword>
<keyword id="KW-0963">Cytoplasm</keyword>
<keyword id="KW-0225">Disease variant</keyword>
<keyword id="KW-1015">Disulfide bond</keyword>
<keyword id="KW-0460">Magnesium</keyword>
<keyword id="KW-0479">Metal-binding</keyword>
<keyword id="KW-0496">Mitochondrion</keyword>
<keyword id="KW-0547">Nucleotide-binding</keyword>
<keyword id="KW-0548">Nucleotidyltransferase</keyword>
<keyword id="KW-0539">Nucleus</keyword>
<keyword id="KW-0597">Phosphoprotein</keyword>
<keyword id="KW-1267">Proteomics identification</keyword>
<keyword id="KW-1185">Reference proteome</keyword>
<keyword id="KW-0682">Retinitis pigmentosa</keyword>
<keyword id="KW-0694">RNA-binding</keyword>
<keyword id="KW-0808">Transferase</keyword>
<keyword id="KW-0809">Transit peptide</keyword>
<keyword id="KW-0819">tRNA processing</keyword>
<proteinExistence type="evidence at protein level"/>
<protein>
    <recommendedName>
        <fullName evidence="34">CCA tRNA nucleotidyltransferase 1, mitochondrial</fullName>
        <ecNumber evidence="6 13 15 23 27">2.7.7.72</ecNumber>
    </recommendedName>
    <alternativeName>
        <fullName>Mitochondrial tRNA nucleotidyl transferase, CCA-adding</fullName>
    </alternativeName>
    <alternativeName>
        <fullName>mt CCA-adding enzyme</fullName>
    </alternativeName>
    <alternativeName>
        <fullName>mt tRNA CCA-diphosphorylase</fullName>
    </alternativeName>
    <alternativeName>
        <fullName>mt tRNA CCA-pyrophosphorylase</fullName>
    </alternativeName>
    <alternativeName>
        <fullName>mt tRNA adenylyltransferase</fullName>
    </alternativeName>
</protein>
<feature type="transit peptide" description="Mitochondrion" evidence="3">
    <location>
        <begin position="1"/>
        <end position="41"/>
    </location>
</feature>
<feature type="chain" id="PRO_0000004782" description="CCA tRNA nucleotidyltransferase 1, mitochondrial">
    <location>
        <begin position="42"/>
        <end position="434"/>
    </location>
</feature>
<feature type="binding site" evidence="2">
    <location>
        <position position="64"/>
    </location>
    <ligand>
        <name>ATP</name>
        <dbReference type="ChEBI" id="CHEBI:30616"/>
    </ligand>
</feature>
<feature type="binding site" evidence="2">
    <location>
        <position position="64"/>
    </location>
    <ligand>
        <name>CTP</name>
        <dbReference type="ChEBI" id="CHEBI:37563"/>
    </ligand>
</feature>
<feature type="binding site" evidence="2">
    <location>
        <position position="67"/>
    </location>
    <ligand>
        <name>ATP</name>
        <dbReference type="ChEBI" id="CHEBI:30616"/>
    </ligand>
</feature>
<feature type="binding site" evidence="2">
    <location>
        <position position="67"/>
    </location>
    <ligand>
        <name>CTP</name>
        <dbReference type="ChEBI" id="CHEBI:37563"/>
    </ligand>
</feature>
<feature type="binding site" evidence="1">
    <location>
        <position position="77"/>
    </location>
    <ligand>
        <name>Mg(2+)</name>
        <dbReference type="ChEBI" id="CHEBI:18420"/>
    </ligand>
</feature>
<feature type="binding site" evidence="1">
    <location>
        <position position="79"/>
    </location>
    <ligand>
        <name>Mg(2+)</name>
        <dbReference type="ChEBI" id="CHEBI:18420"/>
    </ligand>
</feature>
<feature type="binding site" evidence="2">
    <location>
        <position position="151"/>
    </location>
    <ligand>
        <name>ATP</name>
        <dbReference type="ChEBI" id="CHEBI:30616"/>
    </ligand>
</feature>
<feature type="binding site" evidence="2">
    <location>
        <position position="151"/>
    </location>
    <ligand>
        <name>CTP</name>
        <dbReference type="ChEBI" id="CHEBI:37563"/>
    </ligand>
</feature>
<feature type="binding site" evidence="2">
    <location>
        <position position="194"/>
    </location>
    <ligand>
        <name>ATP</name>
        <dbReference type="ChEBI" id="CHEBI:30616"/>
    </ligand>
</feature>
<feature type="binding site" evidence="2">
    <location>
        <position position="194"/>
    </location>
    <ligand>
        <name>CTP</name>
        <dbReference type="ChEBI" id="CHEBI:37563"/>
    </ligand>
</feature>
<feature type="binding site" evidence="2">
    <location>
        <position position="197"/>
    </location>
    <ligand>
        <name>ATP</name>
        <dbReference type="ChEBI" id="CHEBI:30616"/>
    </ligand>
</feature>
<feature type="binding site" evidence="2">
    <location>
        <position position="197"/>
    </location>
    <ligand>
        <name>CTP</name>
        <dbReference type="ChEBI" id="CHEBI:37563"/>
    </ligand>
</feature>
<feature type="binding site" evidence="2">
    <location>
        <position position="200"/>
    </location>
    <ligand>
        <name>ATP</name>
        <dbReference type="ChEBI" id="CHEBI:30616"/>
    </ligand>
</feature>
<feature type="binding site" evidence="2">
    <location>
        <position position="200"/>
    </location>
    <ligand>
        <name>CTP</name>
        <dbReference type="ChEBI" id="CHEBI:37563"/>
    </ligand>
</feature>
<feature type="binding site" evidence="2">
    <location>
        <position position="203"/>
    </location>
    <ligand>
        <name>ATP</name>
        <dbReference type="ChEBI" id="CHEBI:30616"/>
    </ligand>
</feature>
<feature type="binding site" evidence="2">
    <location>
        <position position="203"/>
    </location>
    <ligand>
        <name>CTP</name>
        <dbReference type="ChEBI" id="CHEBI:37563"/>
    </ligand>
</feature>
<feature type="site" description="May assist in discriminating ATP from CTP" evidence="2">
    <location>
        <position position="152"/>
    </location>
</feature>
<feature type="site" description="Involved in nucleotide selection" evidence="3">
    <location>
        <position position="193"/>
    </location>
</feature>
<feature type="modified residue" description="Phosphoserine" evidence="40">
    <location>
        <position position="400"/>
    </location>
</feature>
<feature type="modified residue" description="N6-acetyllysine" evidence="39">
    <location>
        <position position="402"/>
    </location>
</feature>
<feature type="disulfide bond" description="Interchain" evidence="7 24 37">
    <location>
        <position position="373"/>
    </location>
</feature>
<feature type="splice variant" id="VSP_008440" description="In isoform 3." evidence="31">
    <original>ELFVKENH</original>
    <variation>GINAFHEN</variation>
    <location>
        <begin position="50"/>
        <end position="57"/>
    </location>
</feature>
<feature type="splice variant" id="VSP_008441" description="In isoform 3." evidence="31">
    <location>
        <begin position="58"/>
        <end position="434"/>
    </location>
</feature>
<feature type="splice variant" id="VSP_008442" description="In isoform 2." evidence="32">
    <location>
        <begin position="248"/>
        <end position="267"/>
    </location>
</feature>
<feature type="sequence variant" id="VAR_048698" description="In dbSNP:rs334773." evidence="4 6 8 9 11 29">
    <original>P</original>
    <variation>L</variation>
    <location>
        <position position="23"/>
    </location>
</feature>
<feature type="sequence variant" id="VAR_088001" description="In SIFD; uncertain significance." evidence="28">
    <original>M</original>
    <variation>V</variation>
    <location>
        <position position="30"/>
    </location>
</feature>
<feature type="sequence variant" id="VAR_076924" description="In RPEM." evidence="16">
    <location>
        <position position="43"/>
    </location>
</feature>
<feature type="sequence variant" id="VAR_088002" description="In SIFD." evidence="19 22">
    <original>R</original>
    <variation>W</variation>
    <location>
        <position position="99"/>
    </location>
</feature>
<feature type="sequence variant" id="VAR_088003" description="In SIFD; uncertain significance." evidence="28">
    <original>I</original>
    <variation>T</variation>
    <location>
        <position position="101"/>
    </location>
</feature>
<feature type="sequence variant" id="VAR_088004" description="In SIFD." evidence="22">
    <original>T</original>
    <variation>I</variation>
    <location>
        <position position="110"/>
    </location>
</feature>
<feature type="sequence variant" id="VAR_088005" description="In SIFD; uncertain significance." evidence="28">
    <original>E</original>
    <variation>D</variation>
    <location>
        <position position="121"/>
    </location>
</feature>
<feature type="sequence variant" id="VAR_088006" description="In SIFD." evidence="15 22">
    <original>D</original>
    <variation>G</variation>
    <location>
        <position position="128"/>
    </location>
</feature>
<feature type="sequence variant" id="VAR_088007" description="In SIFD." evidence="15">
    <original>A</original>
    <variation>V</variation>
    <location>
        <position position="148"/>
    </location>
</feature>
<feature type="sequence variant" id="VAR_072421" description="In SIFD; reduced CCA tRNA nucleotidyltransferasevactivity; decreased stability; dbSNP:rs606231290." evidence="13 17 23">
    <original>T</original>
    <variation>I</variation>
    <location>
        <position position="154"/>
    </location>
</feature>
<feature type="sequence variant" id="VAR_088008" description="In SIFD." evidence="21">
    <original>I</original>
    <variation>T</variation>
    <location>
        <position position="155"/>
    </location>
</feature>
<feature type="sequence variant" id="VAR_072422" description="In SIFD; loss of CCA tRNA nucleotidyltransferase activity; dbSNP:rs771781629." evidence="13 23">
    <original>M</original>
    <variation>V</variation>
    <location>
        <position position="158"/>
    </location>
</feature>
<feature type="sequence variant" id="VAR_088009" description="In SIFD." evidence="22">
    <original>D</original>
    <variation>V</variation>
    <location>
        <position position="163"/>
    </location>
</feature>
<feature type="sequence variant" id="VAR_072423" description="In SIFD; loss of CCA tRNA nucleotidyltransferase activity; decreased stability; dbSNP:rs606231289." evidence="13 17 23">
    <original>L</original>
    <variation>S</variation>
    <location>
        <position position="166"/>
    </location>
</feature>
<feature type="sequence variant" id="VAR_088010" description="In SIFD." evidence="15">
    <original>Y</original>
    <variation>F</variation>
    <location>
        <position position="173"/>
    </location>
</feature>
<feature type="sequence variant" id="VAR_088011" description="In SIFD; uncertain significance." evidence="26">
    <location>
        <begin position="176"/>
        <end position="434"/>
    </location>
</feature>
<feature type="sequence variant" id="VAR_072424" description="In SIFD; loss of CCA tRNA nucleotidyltransferase activity; dbSNP:rs606231287." evidence="13 17 18 23">
    <original>R</original>
    <variation>I</variation>
    <location>
        <position position="190"/>
    </location>
</feature>
<feature type="sequence variant" id="VAR_088012" description="In SIFD." evidence="21">
    <original>R</original>
    <variation>K</variation>
    <location>
        <position position="203"/>
    </location>
</feature>
<feature type="sequence variant" id="VAR_088013" description="In SIFD." evidence="22">
    <original>H</original>
    <variation>R</variation>
    <location>
        <position position="215"/>
    </location>
</feature>
<feature type="sequence variant" id="VAR_072425" description="In SIFD; loss of CCA tRNA nucleotidyltransferase activity; dbSNP:rs370011798." evidence="13 18 22 23">
    <original>I</original>
    <variation>T</variation>
    <location>
        <position position="223"/>
    </location>
</feature>
<feature type="sequence variant" id="VAR_088014" description="In SIFD; uncertain significance." evidence="26">
    <original>L</original>
    <variation>S</variation>
    <location>
        <position position="313"/>
    </location>
</feature>
<feature type="sequence variant" id="VAR_072426" description="In SIFD; decreased CCA tRNA nucleotidyltransferase activity; abolished homodimerization and disulfide bond formation." evidence="13 24">
    <original>I</original>
    <variation>T</variation>
    <location>
        <position position="326"/>
    </location>
</feature>
<feature type="sequence variant" id="VAR_088015" description="In SIFD; uncertain significance." evidence="28">
    <location>
        <begin position="412"/>
        <end position="434"/>
    </location>
</feature>
<feature type="sequence variant" id="VAR_072427" description="In SIFD; dbSNP:rs199931785." evidence="13 22">
    <original>K</original>
    <variation>E</variation>
    <location>
        <position position="416"/>
    </location>
</feature>
<feature type="mutagenesis site" description="Decreased CCA tRNA nucleotidyltransferase activity; abolished homodimerization and disulfide bond formation." evidence="24">
    <original>I</original>
    <variation>A</variation>
    <location>
        <position position="326"/>
    </location>
</feature>
<feature type="mutagenesis site" description="Abolished homodimerization and disulfide bond formation." evidence="24">
    <original>C</original>
    <variation>A</variation>
    <location>
        <position position="373"/>
    </location>
</feature>
<feature type="helix" evidence="42">
    <location>
        <begin position="35"/>
        <end position="38"/>
    </location>
</feature>
<feature type="helix" evidence="42">
    <location>
        <begin position="43"/>
        <end position="54"/>
    </location>
</feature>
<feature type="strand" evidence="42">
    <location>
        <begin position="59"/>
        <end position="62"/>
    </location>
</feature>
<feature type="helix" evidence="42">
    <location>
        <begin position="64"/>
        <end position="70"/>
    </location>
</feature>
<feature type="strand" evidence="42">
    <location>
        <begin position="79"/>
        <end position="84"/>
    </location>
</feature>
<feature type="helix" evidence="42">
    <location>
        <begin position="86"/>
        <end position="96"/>
    </location>
</feature>
<feature type="strand" evidence="42">
    <location>
        <begin position="99"/>
        <end position="101"/>
    </location>
</feature>
<feature type="strand" evidence="42">
    <location>
        <begin position="110"/>
        <end position="115"/>
    </location>
</feature>
<feature type="strand" evidence="42">
    <location>
        <begin position="118"/>
        <end position="124"/>
    </location>
</feature>
<feature type="strand" evidence="42">
    <location>
        <begin position="126"/>
        <end position="129"/>
    </location>
</feature>
<feature type="strand" evidence="42">
    <location>
        <begin position="137"/>
        <end position="140"/>
    </location>
</feature>
<feature type="helix" evidence="42">
    <location>
        <begin position="144"/>
        <end position="150"/>
    </location>
</feature>
<feature type="strand" evidence="42">
    <location>
        <begin position="151"/>
        <end position="153"/>
    </location>
</feature>
<feature type="helix" evidence="42">
    <location>
        <begin position="154"/>
        <end position="156"/>
    </location>
</feature>
<feature type="strand" evidence="42">
    <location>
        <begin position="169"/>
        <end position="171"/>
    </location>
</feature>
<feature type="helix" evidence="42">
    <location>
        <begin position="172"/>
        <end position="177"/>
    </location>
</feature>
<feature type="strand" evidence="42">
    <location>
        <begin position="183"/>
        <end position="185"/>
    </location>
</feature>
<feature type="helix" evidence="42">
    <location>
        <begin position="187"/>
        <end position="193"/>
    </location>
</feature>
<feature type="helix" evidence="42">
    <location>
        <begin position="197"/>
        <end position="208"/>
    </location>
</feature>
<feature type="strand" evidence="41">
    <location>
        <begin position="210"/>
        <end position="213"/>
    </location>
</feature>
<feature type="helix" evidence="42">
    <location>
        <begin position="217"/>
        <end position="226"/>
    </location>
</feature>
<feature type="helix" evidence="42">
    <location>
        <begin position="227"/>
        <end position="232"/>
    </location>
</feature>
<feature type="helix" evidence="42">
    <location>
        <begin position="235"/>
        <end position="247"/>
    </location>
</feature>
<feature type="helix" evidence="42">
    <location>
        <begin position="251"/>
        <end position="260"/>
    </location>
</feature>
<feature type="helix" evidence="42">
    <location>
        <begin position="264"/>
        <end position="267"/>
    </location>
</feature>
<feature type="helix" evidence="42">
    <location>
        <begin position="275"/>
        <end position="285"/>
    </location>
</feature>
<feature type="helix" evidence="42">
    <location>
        <begin position="292"/>
        <end position="296"/>
    </location>
</feature>
<feature type="helix" evidence="42">
    <location>
        <begin position="297"/>
        <end position="299"/>
    </location>
</feature>
<feature type="helix" evidence="42">
    <location>
        <begin position="304"/>
        <end position="313"/>
    </location>
</feature>
<feature type="helix" evidence="42">
    <location>
        <begin position="317"/>
        <end position="329"/>
    </location>
</feature>
<feature type="turn" evidence="42">
    <location>
        <begin position="330"/>
        <end position="332"/>
    </location>
</feature>
<feature type="strand" evidence="42">
    <location>
        <begin position="337"/>
        <end position="340"/>
    </location>
</feature>
<feature type="helix" evidence="42">
    <location>
        <begin position="344"/>
        <end position="351"/>
    </location>
</feature>
<feature type="helix" evidence="42">
    <location>
        <begin position="358"/>
        <end position="368"/>
    </location>
</feature>
<feature type="helix" evidence="42">
    <location>
        <begin position="372"/>
        <end position="379"/>
    </location>
</feature>
<feature type="helix" evidence="42">
    <location>
        <begin position="390"/>
        <end position="395"/>
    </location>
</feature>
<feature type="helix" evidence="42">
    <location>
        <begin position="401"/>
        <end position="417"/>
    </location>
</feature>
<feature type="helix" evidence="42">
    <location>
        <begin position="424"/>
        <end position="434"/>
    </location>
</feature>
<reference key="1">
    <citation type="journal article" date="2001" name="J. Biol. Chem.">
        <title>Identification and characterization of mammalian mitochondrial tRNA nucleotidyltransferases.</title>
        <authorList>
            <person name="Nagaike T."/>
            <person name="Suzuki T."/>
            <person name="Tomari Y."/>
            <person name="Takemoto-Hori C."/>
            <person name="Negayama F."/>
            <person name="Watanabe K."/>
            <person name="Ueda T."/>
        </authorList>
    </citation>
    <scope>NUCLEOTIDE SEQUENCE [MRNA] (ISOFORM 1)</scope>
    <scope>FUNCTION</scope>
    <scope>SUBCELLULAR LOCATION</scope>
    <scope>CATALYTIC ACTIVITY</scope>
    <scope>VARIANT LEU-23</scope>
</reference>
<reference key="2">
    <citation type="journal article" date="2000" name="Genome Res.">
        <title>Identification of novel human genes evolutionarily conserved in Caenorhabditis elegans by comparative proteomics.</title>
        <authorList>
            <person name="Lai C.-H."/>
            <person name="Chou C.-Y."/>
            <person name="Ch'ang L.-Y."/>
            <person name="Liu C.-S."/>
            <person name="Lin W.-C."/>
        </authorList>
    </citation>
    <scope>NUCLEOTIDE SEQUENCE [LARGE SCALE MRNA] (ISOFORM 1)</scope>
    <scope>VARIANT LEU-23</scope>
</reference>
<reference key="3">
    <citation type="journal article" date="2004" name="Nat. Genet.">
        <title>Complete sequencing and characterization of 21,243 full-length human cDNAs.</title>
        <authorList>
            <person name="Ota T."/>
            <person name="Suzuki Y."/>
            <person name="Nishikawa T."/>
            <person name="Otsuki T."/>
            <person name="Sugiyama T."/>
            <person name="Irie R."/>
            <person name="Wakamatsu A."/>
            <person name="Hayashi K."/>
            <person name="Sato H."/>
            <person name="Nagai K."/>
            <person name="Kimura K."/>
            <person name="Makita H."/>
            <person name="Sekine M."/>
            <person name="Obayashi M."/>
            <person name="Nishi T."/>
            <person name="Shibahara T."/>
            <person name="Tanaka T."/>
            <person name="Ishii S."/>
            <person name="Yamamoto J."/>
            <person name="Saito K."/>
            <person name="Kawai Y."/>
            <person name="Isono Y."/>
            <person name="Nakamura Y."/>
            <person name="Nagahari K."/>
            <person name="Murakami K."/>
            <person name="Yasuda T."/>
            <person name="Iwayanagi T."/>
            <person name="Wagatsuma M."/>
            <person name="Shiratori A."/>
            <person name="Sudo H."/>
            <person name="Hosoiri T."/>
            <person name="Kaku Y."/>
            <person name="Kodaira H."/>
            <person name="Kondo H."/>
            <person name="Sugawara M."/>
            <person name="Takahashi M."/>
            <person name="Kanda K."/>
            <person name="Yokoi T."/>
            <person name="Furuya T."/>
            <person name="Kikkawa E."/>
            <person name="Omura Y."/>
            <person name="Abe K."/>
            <person name="Kamihara K."/>
            <person name="Katsuta N."/>
            <person name="Sato K."/>
            <person name="Tanikawa M."/>
            <person name="Yamazaki M."/>
            <person name="Ninomiya K."/>
            <person name="Ishibashi T."/>
            <person name="Yamashita H."/>
            <person name="Murakawa K."/>
            <person name="Fujimori K."/>
            <person name="Tanai H."/>
            <person name="Kimata M."/>
            <person name="Watanabe M."/>
            <person name="Hiraoka S."/>
            <person name="Chiba Y."/>
            <person name="Ishida S."/>
            <person name="Ono Y."/>
            <person name="Takiguchi S."/>
            <person name="Watanabe S."/>
            <person name="Yosida M."/>
            <person name="Hotuta T."/>
            <person name="Kusano J."/>
            <person name="Kanehori K."/>
            <person name="Takahashi-Fujii A."/>
            <person name="Hara H."/>
            <person name="Tanase T.-O."/>
            <person name="Nomura Y."/>
            <person name="Togiya S."/>
            <person name="Komai F."/>
            <person name="Hara R."/>
            <person name="Takeuchi K."/>
            <person name="Arita M."/>
            <person name="Imose N."/>
            <person name="Musashino K."/>
            <person name="Yuuki H."/>
            <person name="Oshima A."/>
            <person name="Sasaki N."/>
            <person name="Aotsuka S."/>
            <person name="Yoshikawa Y."/>
            <person name="Matsunawa H."/>
            <person name="Ichihara T."/>
            <person name="Shiohata N."/>
            <person name="Sano S."/>
            <person name="Moriya S."/>
            <person name="Momiyama H."/>
            <person name="Satoh N."/>
            <person name="Takami S."/>
            <person name="Terashima Y."/>
            <person name="Suzuki O."/>
            <person name="Nakagawa S."/>
            <person name="Senoh A."/>
            <person name="Mizoguchi H."/>
            <person name="Goto Y."/>
            <person name="Shimizu F."/>
            <person name="Wakebe H."/>
            <person name="Hishigaki H."/>
            <person name="Watanabe T."/>
            <person name="Sugiyama A."/>
            <person name="Takemoto M."/>
            <person name="Kawakami B."/>
            <person name="Yamazaki M."/>
            <person name="Watanabe K."/>
            <person name="Kumagai A."/>
            <person name="Itakura S."/>
            <person name="Fukuzumi Y."/>
            <person name="Fujimori Y."/>
            <person name="Komiyama M."/>
            <person name="Tashiro H."/>
            <person name="Tanigami A."/>
            <person name="Fujiwara T."/>
            <person name="Ono T."/>
            <person name="Yamada K."/>
            <person name="Fujii Y."/>
            <person name="Ozaki K."/>
            <person name="Hirao M."/>
            <person name="Ohmori Y."/>
            <person name="Kawabata A."/>
            <person name="Hikiji T."/>
            <person name="Kobatake N."/>
            <person name="Inagaki H."/>
            <person name="Ikema Y."/>
            <person name="Okamoto S."/>
            <person name="Okitani R."/>
            <person name="Kawakami T."/>
            <person name="Noguchi S."/>
            <person name="Itoh T."/>
            <person name="Shigeta K."/>
            <person name="Senba T."/>
            <person name="Matsumura K."/>
            <person name="Nakajima Y."/>
            <person name="Mizuno T."/>
            <person name="Morinaga M."/>
            <person name="Sasaki M."/>
            <person name="Togashi T."/>
            <person name="Oyama M."/>
            <person name="Hata H."/>
            <person name="Watanabe M."/>
            <person name="Komatsu T."/>
            <person name="Mizushima-Sugano J."/>
            <person name="Satoh T."/>
            <person name="Shirai Y."/>
            <person name="Takahashi Y."/>
            <person name="Nakagawa K."/>
            <person name="Okumura K."/>
            <person name="Nagase T."/>
            <person name="Nomura N."/>
            <person name="Kikuchi H."/>
            <person name="Masuho Y."/>
            <person name="Yamashita R."/>
            <person name="Nakai K."/>
            <person name="Yada T."/>
            <person name="Nakamura Y."/>
            <person name="Ohara O."/>
            <person name="Isogai T."/>
            <person name="Sugano S."/>
        </authorList>
    </citation>
    <scope>NUCLEOTIDE SEQUENCE [LARGE SCALE MRNA] (ISOFORM 1)</scope>
    <scope>VARIANT LEU-23</scope>
    <source>
        <tissue>Umbilical cord blood</tissue>
    </source>
</reference>
<reference key="4">
    <citation type="journal article" date="2007" name="BMC Genomics">
        <title>The full-ORF clone resource of the German cDNA consortium.</title>
        <authorList>
            <person name="Bechtel S."/>
            <person name="Rosenfelder H."/>
            <person name="Duda A."/>
            <person name="Schmidt C.P."/>
            <person name="Ernst U."/>
            <person name="Wellenreuther R."/>
            <person name="Mehrle A."/>
            <person name="Schuster C."/>
            <person name="Bahr A."/>
            <person name="Bloecker H."/>
            <person name="Heubner D."/>
            <person name="Hoerlein A."/>
            <person name="Michel G."/>
            <person name="Wedler H."/>
            <person name="Koehrer K."/>
            <person name="Ottenwaelder B."/>
            <person name="Poustka A."/>
            <person name="Wiemann S."/>
            <person name="Schupp I."/>
        </authorList>
    </citation>
    <scope>NUCLEOTIDE SEQUENCE [LARGE SCALE MRNA] (ISOFORM 2)</scope>
    <scope>VARIANT LEU-23</scope>
    <source>
        <tissue>Brain</tissue>
    </source>
</reference>
<reference key="5">
    <citation type="journal article" date="2006" name="Nature">
        <title>The DNA sequence, annotation and analysis of human chromosome 3.</title>
        <authorList>
            <person name="Muzny D.M."/>
            <person name="Scherer S.E."/>
            <person name="Kaul R."/>
            <person name="Wang J."/>
            <person name="Yu J."/>
            <person name="Sudbrak R."/>
            <person name="Buhay C.J."/>
            <person name="Chen R."/>
            <person name="Cree A."/>
            <person name="Ding Y."/>
            <person name="Dugan-Rocha S."/>
            <person name="Gill R."/>
            <person name="Gunaratne P."/>
            <person name="Harris R.A."/>
            <person name="Hawes A.C."/>
            <person name="Hernandez J."/>
            <person name="Hodgson A.V."/>
            <person name="Hume J."/>
            <person name="Jackson A."/>
            <person name="Khan Z.M."/>
            <person name="Kovar-Smith C."/>
            <person name="Lewis L.R."/>
            <person name="Lozado R.J."/>
            <person name="Metzker M.L."/>
            <person name="Milosavljevic A."/>
            <person name="Miner G.R."/>
            <person name="Morgan M.B."/>
            <person name="Nazareth L.V."/>
            <person name="Scott G."/>
            <person name="Sodergren E."/>
            <person name="Song X.-Z."/>
            <person name="Steffen D."/>
            <person name="Wei S."/>
            <person name="Wheeler D.A."/>
            <person name="Wright M.W."/>
            <person name="Worley K.C."/>
            <person name="Yuan Y."/>
            <person name="Zhang Z."/>
            <person name="Adams C.Q."/>
            <person name="Ansari-Lari M.A."/>
            <person name="Ayele M."/>
            <person name="Brown M.J."/>
            <person name="Chen G."/>
            <person name="Chen Z."/>
            <person name="Clendenning J."/>
            <person name="Clerc-Blankenburg K.P."/>
            <person name="Chen R."/>
            <person name="Chen Z."/>
            <person name="Davis C."/>
            <person name="Delgado O."/>
            <person name="Dinh H.H."/>
            <person name="Dong W."/>
            <person name="Draper H."/>
            <person name="Ernst S."/>
            <person name="Fu G."/>
            <person name="Gonzalez-Garay M.L."/>
            <person name="Garcia D.K."/>
            <person name="Gillett W."/>
            <person name="Gu J."/>
            <person name="Hao B."/>
            <person name="Haugen E."/>
            <person name="Havlak P."/>
            <person name="He X."/>
            <person name="Hennig S."/>
            <person name="Hu S."/>
            <person name="Huang W."/>
            <person name="Jackson L.R."/>
            <person name="Jacob L.S."/>
            <person name="Kelly S.H."/>
            <person name="Kube M."/>
            <person name="Levy R."/>
            <person name="Li Z."/>
            <person name="Liu B."/>
            <person name="Liu J."/>
            <person name="Liu W."/>
            <person name="Lu J."/>
            <person name="Maheshwari M."/>
            <person name="Nguyen B.-V."/>
            <person name="Okwuonu G.O."/>
            <person name="Palmeiri A."/>
            <person name="Pasternak S."/>
            <person name="Perez L.M."/>
            <person name="Phelps K.A."/>
            <person name="Plopper F.J."/>
            <person name="Qiang B."/>
            <person name="Raymond C."/>
            <person name="Rodriguez R."/>
            <person name="Saenphimmachak C."/>
            <person name="Santibanez J."/>
            <person name="Shen H."/>
            <person name="Shen Y."/>
            <person name="Subramanian S."/>
            <person name="Tabor P.E."/>
            <person name="Verduzco D."/>
            <person name="Waldron L."/>
            <person name="Wang J."/>
            <person name="Wang J."/>
            <person name="Wang Q."/>
            <person name="Williams G.A."/>
            <person name="Wong G.K.-S."/>
            <person name="Yao Z."/>
            <person name="Zhang J."/>
            <person name="Zhang X."/>
            <person name="Zhao G."/>
            <person name="Zhou J."/>
            <person name="Zhou Y."/>
            <person name="Nelson D."/>
            <person name="Lehrach H."/>
            <person name="Reinhardt R."/>
            <person name="Naylor S.L."/>
            <person name="Yang H."/>
            <person name="Olson M."/>
            <person name="Weinstock G."/>
            <person name="Gibbs R.A."/>
        </authorList>
    </citation>
    <scope>NUCLEOTIDE SEQUENCE [LARGE SCALE GENOMIC DNA]</scope>
</reference>
<reference key="6">
    <citation type="submission" date="2005-07" db="EMBL/GenBank/DDBJ databases">
        <authorList>
            <person name="Mural R.J."/>
            <person name="Istrail S."/>
            <person name="Sutton G.G."/>
            <person name="Florea L."/>
            <person name="Halpern A.L."/>
            <person name="Mobarry C.M."/>
            <person name="Lippert R."/>
            <person name="Walenz B."/>
            <person name="Shatkay H."/>
            <person name="Dew I."/>
            <person name="Miller J.R."/>
            <person name="Flanigan M.J."/>
            <person name="Edwards N.J."/>
            <person name="Bolanos R."/>
            <person name="Fasulo D."/>
            <person name="Halldorsson B.V."/>
            <person name="Hannenhalli S."/>
            <person name="Turner R."/>
            <person name="Yooseph S."/>
            <person name="Lu F."/>
            <person name="Nusskern D.R."/>
            <person name="Shue B.C."/>
            <person name="Zheng X.H."/>
            <person name="Zhong F."/>
            <person name="Delcher A.L."/>
            <person name="Huson D.H."/>
            <person name="Kravitz S.A."/>
            <person name="Mouchard L."/>
            <person name="Reinert K."/>
            <person name="Remington K.A."/>
            <person name="Clark A.G."/>
            <person name="Waterman M.S."/>
            <person name="Eichler E.E."/>
            <person name="Adams M.D."/>
            <person name="Hunkapiller M.W."/>
            <person name="Myers E.W."/>
            <person name="Venter J.C."/>
        </authorList>
    </citation>
    <scope>NUCLEOTIDE SEQUENCE [LARGE SCALE GENOMIC DNA]</scope>
    <scope>VARIANT LEU-23</scope>
</reference>
<reference key="7">
    <citation type="journal article" date="2004" name="Genome Res.">
        <title>The status, quality, and expansion of the NIH full-length cDNA project: the Mammalian Gene Collection (MGC).</title>
        <authorList>
            <consortium name="The MGC Project Team"/>
        </authorList>
    </citation>
    <scope>NUCLEOTIDE SEQUENCE [LARGE SCALE MRNA] (ISOFORMS 1 AND 3)</scope>
    <scope>VARIANT LEU-23</scope>
    <source>
        <tissue>Bone marrow</tissue>
    </source>
</reference>
<reference key="8">
    <citation type="journal article" date="2000" name="EMBO Rep.">
        <title>Systematic subcellular localization of novel proteins identified by large-scale cDNA sequencing.</title>
        <authorList>
            <person name="Simpson J.C."/>
            <person name="Wellenreuther R."/>
            <person name="Poustka A."/>
            <person name="Pepperkok R."/>
            <person name="Wiemann S."/>
        </authorList>
    </citation>
    <scope>SUBCELLULAR LOCATION</scope>
</reference>
<reference key="9">
    <citation type="journal article" date="2007" name="J. Mol. Biol.">
        <title>A splice variant of the human CCA-adding enzyme with modified activity.</title>
        <authorList>
            <person name="Lizano E."/>
            <person name="Schuster J."/>
            <person name="Muller M."/>
            <person name="Kelso J."/>
            <person name="Morl M."/>
        </authorList>
    </citation>
    <scope>FUNCTION (ISOFORM 2)</scope>
</reference>
<reference key="10">
    <citation type="journal article" date="2008" name="Proc. Natl. Acad. Sci. U.S.A.">
        <title>A quantitative atlas of mitotic phosphorylation.</title>
        <authorList>
            <person name="Dephoure N."/>
            <person name="Zhou C."/>
            <person name="Villen J."/>
            <person name="Beausoleil S.A."/>
            <person name="Bakalarski C.E."/>
            <person name="Elledge S.J."/>
            <person name="Gygi S.P."/>
        </authorList>
    </citation>
    <scope>IDENTIFICATION BY MASS SPECTROMETRY [LARGE SCALE ANALYSIS]</scope>
    <source>
        <tissue>Cervix carcinoma</tissue>
    </source>
</reference>
<reference key="11">
    <citation type="journal article" date="2009" name="Science">
        <title>Lysine acetylation targets protein complexes and co-regulates major cellular functions.</title>
        <authorList>
            <person name="Choudhary C."/>
            <person name="Kumar C."/>
            <person name="Gnad F."/>
            <person name="Nielsen M.L."/>
            <person name="Rehman M."/>
            <person name="Walther T.C."/>
            <person name="Olsen J.V."/>
            <person name="Mann M."/>
        </authorList>
    </citation>
    <scope>ACETYLATION [LARGE SCALE ANALYSIS] AT LYS-402</scope>
    <scope>IDENTIFICATION BY MASS SPECTROMETRY [LARGE SCALE ANALYSIS]</scope>
</reference>
<reference key="12">
    <citation type="journal article" date="2010" name="Sci. Signal.">
        <title>Quantitative phosphoproteomics reveals widespread full phosphorylation site occupancy during mitosis.</title>
        <authorList>
            <person name="Olsen J.V."/>
            <person name="Vermeulen M."/>
            <person name="Santamaria A."/>
            <person name="Kumar C."/>
            <person name="Miller M.L."/>
            <person name="Jensen L.J."/>
            <person name="Gnad F."/>
            <person name="Cox J."/>
            <person name="Jensen T.S."/>
            <person name="Nigg E.A."/>
            <person name="Brunak S."/>
            <person name="Mann M."/>
        </authorList>
    </citation>
    <scope>PHOSPHORYLATION [LARGE SCALE ANALYSIS] AT SER-400</scope>
    <scope>IDENTIFICATION BY MASS SPECTROMETRY [LARGE SCALE ANALYSIS]</scope>
    <source>
        <tissue>Cervix carcinoma</tissue>
    </source>
</reference>
<reference key="13">
    <citation type="journal article" date="2011" name="BMC Syst. Biol.">
        <title>Initial characterization of the human central proteome.</title>
        <authorList>
            <person name="Burkard T.R."/>
            <person name="Planyavsky M."/>
            <person name="Kaupe I."/>
            <person name="Breitwieser F.P."/>
            <person name="Buerckstuemmer T."/>
            <person name="Bennett K.L."/>
            <person name="Superti-Furga G."/>
            <person name="Colinge J."/>
        </authorList>
    </citation>
    <scope>IDENTIFICATION BY MASS SPECTROMETRY [LARGE SCALE ANALYSIS]</scope>
</reference>
<reference key="14">
    <citation type="journal article" date="2015" name="Proteomics">
        <title>N-terminome analysis of the human mitochondrial proteome.</title>
        <authorList>
            <person name="Vaca Jacome A.S."/>
            <person name="Rabilloud T."/>
            <person name="Schaeffer-Reiss C."/>
            <person name="Rompais M."/>
            <person name="Ayoub D."/>
            <person name="Lane L."/>
            <person name="Bairoch A."/>
            <person name="Van Dorsselaer A."/>
            <person name="Carapito C."/>
        </authorList>
    </citation>
    <scope>IDENTIFICATION BY MASS SPECTROMETRY [LARGE SCALE ANALYSIS]</scope>
</reference>
<reference key="15">
    <citation type="journal article" date="2011" name="Science">
        <title>tRNAs marked with CCACCA are targeted for degradation.</title>
        <authorList>
            <person name="Wilusz J.E."/>
            <person name="Whipple J.M."/>
            <person name="Phizicky E.M."/>
            <person name="Sharp P.A."/>
        </authorList>
    </citation>
    <scope>FUNCTION</scope>
    <scope>CATALYTIC ACTIVITY</scope>
</reference>
<reference key="16">
    <citation type="journal article" date="2019" name="Nat. Struct. Mol. Biol.">
        <title>Mechanism for recycling tRNAs on stalled ribosomes.</title>
        <authorList>
            <person name="Yip M.C.J."/>
            <person name="Keszei A.F.A."/>
            <person name="Feng Q."/>
            <person name="Chu V."/>
            <person name="McKenna M.J."/>
            <person name="Shao S."/>
        </authorList>
    </citation>
    <scope>FUNCTION</scope>
    <scope>CATALYTIC ACTIVITY</scope>
</reference>
<reference key="17">
    <citation type="journal article" date="2021" name="J. Biol. Chem.">
        <title>Mechanistic insights into mitochondrial tRNAAla 3'-end metabolism deficiency.</title>
        <authorList>
            <person name="Ji Y."/>
            <person name="Nie Z."/>
            <person name="Meng F."/>
            <person name="Hu C."/>
            <person name="Chen H."/>
            <person name="Jin L."/>
            <person name="Chen M."/>
            <person name="Zhang M."/>
            <person name="Zhang J."/>
            <person name="Liang M."/>
            <person name="Wang M."/>
            <person name="Guan M.X."/>
        </authorList>
    </citation>
    <scope>FUNCTION</scope>
</reference>
<reference key="18">
    <citation type="journal article" date="2014" name="Blood">
        <title>Mutations in TRNT1 cause congenital sideroblastic anemia with immunodeficiency, fevers, and developmental delay (SIFD).</title>
        <authorList>
            <person name="Chakraborty P.K."/>
            <person name="Schmitz-Abe K."/>
            <person name="Kennedy E.K."/>
            <person name="Mamady H."/>
            <person name="Naas T."/>
            <person name="Durie D."/>
            <person name="Campagna D.R."/>
            <person name="Lau A."/>
            <person name="Sendamarai A.K."/>
            <person name="Wiseman D.H."/>
            <person name="May A."/>
            <person name="Jolles S."/>
            <person name="Connor P."/>
            <person name="Powell C."/>
            <person name="Heeney M.M."/>
            <person name="Giardina P.J."/>
            <person name="Klaassen R.J."/>
            <person name="Kannengiesser C."/>
            <person name="Thuret I."/>
            <person name="Thompson A.A."/>
            <person name="Marques L."/>
            <person name="Hughes S."/>
            <person name="Bonney D.K."/>
            <person name="Bottomley S.S."/>
            <person name="Wynn R.F."/>
            <person name="Laxer R.M."/>
            <person name="Minniti C.P."/>
            <person name="Moppett J."/>
            <person name="Bordon V."/>
            <person name="Geraghty M."/>
            <person name="Joyce P.B."/>
            <person name="Markianos K."/>
            <person name="Rudner A.D."/>
            <person name="Holcik M."/>
            <person name="Fleming M.D."/>
        </authorList>
    </citation>
    <scope>INVOLVEMENT IN SIFD</scope>
    <scope>VARIANTS SIFD ILE-154; VAL-158; SER-166; ILE-190; THR-223; THR-326 AND GLU-416</scope>
    <scope>CHARACTERIZATION OF VARIANTS SIFD ILE-154; VAL-158; SER-166; ILE-190; THR-223 AND THR-326</scope>
    <scope>FUNCTION</scope>
    <scope>CATALYTIC ACTIVITY</scope>
</reference>
<reference key="19">
    <citation type="journal article" date="2015" name="Hum. Mol. Genet.">
        <title>The 3' addition of CCA to mitochondrial tRNASer(AGY) is specifically impaired in patients with mutations in the tRNA nucleotidyl transferase TRNT1.</title>
        <authorList>
            <person name="Sasarman F."/>
            <person name="Thiffault I."/>
            <person name="Weraarpachai W."/>
            <person name="Salomon S."/>
            <person name="Maftei C."/>
            <person name="Gauthier J."/>
            <person name="Ellazam B."/>
            <person name="Webb N."/>
            <person name="Antonicka H."/>
            <person name="Janer A."/>
            <person name="Brunel-Guitton C."/>
            <person name="Elpeleg O."/>
            <person name="Mitchell G."/>
            <person name="Shoubridge E.A."/>
        </authorList>
    </citation>
    <scope>VARIANTS SIFD GLY-128; VAL-148 AND PHE-173</scope>
    <scope>FUNCTION</scope>
    <scope>CATALYTIC ACTIVITY</scope>
</reference>
<reference key="20">
    <citation type="journal article" date="2016" name="Hum. Mol. Genet.">
        <title>Hypomorphic mutations in TRNT1 cause retinitis pigmentosa with erythrocytic microcytosis.</title>
        <authorList>
            <person name="DeLuca A.P."/>
            <person name="Whitmore S.S."/>
            <person name="Barnes J."/>
            <person name="Sharma T.P."/>
            <person name="Westfall T.A."/>
            <person name="Scott C.A."/>
            <person name="Weed M.C."/>
            <person name="Wiley J.S."/>
            <person name="Wiley L.A."/>
            <person name="Johnston R.M."/>
            <person name="Schnieders M.J."/>
            <person name="Lentz S.R."/>
            <person name="Tucker B.A."/>
            <person name="Mullins R.F."/>
            <person name="Scheetz T.E."/>
            <person name="Stone E.M."/>
            <person name="Slusarski D.C."/>
        </authorList>
    </citation>
    <scope>INVOLVEMENT IN RPEM</scope>
    <scope>VARIANT RPEM GLU-43 DEL</scope>
</reference>
<reference key="21">
    <citation type="journal article" date="2016" name="Orphanet J. Rare Dis.">
        <title>Impaired activity of CCA-adding enzyme TRNT1 impacts OXPHOS complexes and cellular respiration in SIFD patient-derived fibroblasts.</title>
        <authorList>
            <person name="Liwak-Muir U."/>
            <person name="Mamady H."/>
            <person name="Naas T."/>
            <person name="Wylie Q."/>
            <person name="McBride S."/>
            <person name="Lines M."/>
            <person name="Michaud J."/>
            <person name="Baird S.D."/>
            <person name="Chakraborty P.K."/>
            <person name="Holcik M."/>
        </authorList>
    </citation>
    <scope>VARIANTS SIFD ILE-154; SER-166 AND ILE-190</scope>
    <scope>SUBCELLULAR LOCATION</scope>
</reference>
<reference key="22">
    <citation type="journal article" date="2016" name="Orphanet J. Rare Dis.">
        <title>TRNT1 deficiency: clinical, biochemical and molecular genetic features.</title>
        <authorList>
            <person name="Wedatilake Y."/>
            <person name="Niazi R."/>
            <person name="Fassone E."/>
            <person name="Powell C.A."/>
            <person name="Pearce S."/>
            <person name="Plagnol V."/>
            <person name="Saldanha J.W."/>
            <person name="Kleta R."/>
            <person name="Chong W.K."/>
            <person name="Footitt E."/>
            <person name="Mills P.B."/>
            <person name="Taanman J.W."/>
            <person name="Minczuk M."/>
            <person name="Clayton P.T."/>
            <person name="Rahman S."/>
        </authorList>
    </citation>
    <scope>VARIANTS SIFD ILE-190 AND THR-223</scope>
</reference>
<reference key="23">
    <citation type="journal article" date="2017" name="J. Allergy Clin. Immunol.">
        <title>Homozygous N-terminal missense mutation in TRNT1 leads to progressive B-cell immunodeficiency in adulthood.</title>
        <authorList>
            <person name="Frans G."/>
            <person name="Moens L."/>
            <person name="Schaballie H."/>
            <person name="Wuyts G."/>
            <person name="Liston A."/>
            <person name="Poesen K."/>
            <person name="Janssens A."/>
            <person name="Rice G.I."/>
            <person name="Crow Y.J."/>
            <person name="Meyts I."/>
            <person name="Bossuyt X."/>
        </authorList>
    </citation>
    <scope>VARIANT SIFD TRP-99</scope>
</reference>
<reference key="24">
    <citation type="journal article" date="2018" name="Ann. Rheum. Dis.">
        <title>Aberrant tRNA processing causes an autoinflammatory syndrome responsive to TNF inhibitors.</title>
        <authorList>
            <person name="Giannelou A."/>
            <person name="Wang H."/>
            <person name="Zhou Q."/>
            <person name="Park Y.H."/>
            <person name="Abu-Asab M.S."/>
            <person name="Ylaya K."/>
            <person name="Stone D.L."/>
            <person name="Sediva A."/>
            <person name="Sleiman R."/>
            <person name="Sramkova L."/>
            <person name="Bhatla D."/>
            <person name="Serti E."/>
            <person name="Tsai W.L."/>
            <person name="Yang D."/>
            <person name="Bishop K."/>
            <person name="Carrington B."/>
            <person name="Pei W."/>
            <person name="Deuitch N."/>
            <person name="Brooks S."/>
            <person name="Edwan J.H."/>
            <person name="Joshi S."/>
            <person name="Prader S."/>
            <person name="Kaiser D."/>
            <person name="Owen W.C."/>
            <person name="Sonbul A.A."/>
            <person name="Zhang Y."/>
            <person name="Niemela J.E."/>
            <person name="Burgess S.M."/>
            <person name="Boehm M."/>
            <person name="Rehermann B."/>
            <person name="Chae J."/>
            <person name="Quezado M.M."/>
            <person name="Ombrello A.K."/>
            <person name="Buckley R.H."/>
            <person name="Grom A.A."/>
            <person name="Remmers E.F."/>
            <person name="Pachlopnik J.M."/>
            <person name="Su H.C."/>
            <person name="Gutierrez-Cruz G."/>
            <person name="Hewitt S.M."/>
            <person name="Sood R."/>
            <person name="Risma K."/>
            <person name="Calvo K.R."/>
            <person name="Rosenzweig S.D."/>
            <person name="Gadina M."/>
            <person name="Hafner M."/>
            <person name="Sun H.W."/>
            <person name="Kastner D.L."/>
            <person name="Aksentijevich I."/>
        </authorList>
    </citation>
    <scope>VARIANTS SIFD TRP-99; ILE-110; GLY-128; VAL-163; ARG-215; THR-223 AND GLU-416</scope>
</reference>
<reference key="25">
    <citation type="journal article" date="2018" name="Biochim. Biophys. Acta">
        <title>In vitro studies of disease-linked variants of human tRNA nucleotidyltransferase reveal decreased thermal stability and altered catalytic activity.</title>
        <authorList>
            <person name="Leibovitch M."/>
            <person name="Hanic-Joyce P.J."/>
            <person name="Joyce P.B.M."/>
        </authorList>
    </citation>
    <scope>VARIANTS SIFD ILE-154; VAL-158; SER-166; ILE-190 AND THR-223</scope>
    <scope>CHARACTERIZATION OF VARIANTS SIFD ILE-154; VAL-158; SER-166; ILE-190 AND THR-223</scope>
    <scope>FUNCTION</scope>
    <scope>CATALYTIC ACTIVITY</scope>
    <scope>BIOPHYSICOCHEMICAL PROPERTIES</scope>
</reference>
<reference key="26">
    <citation type="journal article" date="2018" name="Clin. Immunol.">
        <title>Novel biallelic TRNT1 mutations resulting in sideroblastic anemia, combined B and T cell defects, hypogammaglobulinemia, recurrent infections, hypertrophic cardiomyopathy and developmental delay.</title>
        <authorList>
            <person name="Lougaris V."/>
            <person name="Chou J."/>
            <person name="Baronio M."/>
            <person name="Gazzurelli L."/>
            <person name="Lorenzini T."/>
            <person name="Soresina A."/>
            <person name="Moratto D."/>
            <person name="Badolato R."/>
            <person name="Seleman M."/>
            <person name="Bellettato M."/>
            <person name="Geha R.S."/>
            <person name="Plebani A."/>
        </authorList>
    </citation>
    <scope>VARIANTS SIFD THR-155 AND LYS-203</scope>
</reference>
<reference key="27">
    <citation type="journal article" date="2018" name="J. Clin. Pathol.">
        <title>SIFD as a novel cause of severe fetal hydrops and neonatal anaemia with iron loading and marked extramedullary haemopoiesis.</title>
        <authorList>
            <person name="Barton C."/>
            <person name="Kausar S."/>
            <person name="Kerr D."/>
            <person name="Bitetti S."/>
            <person name="Wynn R."/>
        </authorList>
    </citation>
    <scope>INVOLVEMENT IN SIFD</scope>
</reference>
<reference key="28">
    <citation type="journal article" date="2019" name="Biochim. Biophys. Acta">
        <title>Analysis of the pathogenic I326T variant of human tRNA nucleotidyltransferase reveals reduced catalytic activity and thermal stability in vitro linked to a conformational change.</title>
        <authorList>
            <person name="Leibovitch M."/>
            <person name="Reid N.E."/>
            <person name="Victoria J."/>
            <person name="Hanic-Joyce P.J."/>
            <person name="Joyce P.B.M."/>
        </authorList>
    </citation>
    <scope>VARIANT SIFD THR-326</scope>
    <scope>CHARACTERIZATION OF VARIANT SIFD THR-326</scope>
    <scope>FUNCTION</scope>
    <scope>CATALYTIC ACTIVITY</scope>
    <scope>SUBUNIT</scope>
    <scope>DISULFIDE BOND</scope>
    <scope>MUTAGENESIS OF ILE-326 AND CYS-373</scope>
</reference>
<reference key="29">
    <citation type="journal article" date="2020" name="Genes Dis.">
        <title>Novel biallelic TRNT1 mutations lead to atypical SIFD and multiple immune defects.</title>
        <authorList>
            <person name="Yang L."/>
            <person name="Xue X."/>
            <person name="Zeng T."/>
            <person name="Chen X."/>
            <person name="Zhao Q."/>
            <person name="Tang X."/>
            <person name="Yang J."/>
            <person name="An Y."/>
            <person name="Zhao X."/>
        </authorList>
    </citation>
    <scope>VARIANTS SIFD 176-LEU--THR-434 DEL AND SER-313</scope>
</reference>
<reference key="30">
    <citation type="journal article" date="2021" name="Clin. Chim. Acta">
        <title>Two cases of sideroblastic anemia with B-cell immunodeficiency, periodic fevers, and developmental delay (SIFD) syndrome in Chinese Han children caused by novel compound heterozygous variants of the TRNT1 gene.</title>
        <authorList>
            <person name="Wang J."/>
            <person name="Deng Q."/>
            <person name="He X."/>
            <person name="Chen D."/>
            <person name="Hang S."/>
            <person name="Gao Y."/>
            <person name="Chen Y."/>
        </authorList>
    </citation>
    <scope>VARIANTS SIFD VAL-30; THR-101; ASP-121 AND 412-ARG--THR-434 DEL</scope>
</reference>
<reference key="31">
    <citation type="journal article" date="2003" name="J. Mol. Biol.">
        <title>Crystal structure of the human CCA-adding enzyme: insights into template-independent polymerization.</title>
        <authorList>
            <person name="Augustin M.A."/>
            <person name="Reichert A.S."/>
            <person name="Betat H."/>
            <person name="Huber R."/>
            <person name="Moerl M."/>
            <person name="Steegborn C."/>
        </authorList>
    </citation>
    <scope>X-RAY CRYSTALLOGRAPHY (3.4 ANGSTROMS) OF 30-434</scope>
    <scope>DIMERIZATION</scope>
    <scope>DISULFIDE BOND</scope>
</reference>
<reference evidence="38" key="32">
    <citation type="journal article" date="2015" name="Cell">
        <title>On-enzyme refolding permits small RNA and tRNA surveillance by the CCA-adding enzyme.</title>
        <authorList>
            <person name="Kuhn C.D."/>
            <person name="Wilusz J.E."/>
            <person name="Zheng Y."/>
            <person name="Beal P.A."/>
            <person name="Joshua-Tor L."/>
        </authorList>
    </citation>
    <scope>X-RAY CRYSTALLOGRAPHY (1.90 ANGSTROMS) OF 27-434</scope>
    <scope>FUNCTION</scope>
    <scope>CATALYTIC ACTIVITY</scope>
</reference>
<name>TRNT1_HUMAN</name>
<organism>
    <name type="scientific">Homo sapiens</name>
    <name type="common">Human</name>
    <dbReference type="NCBI Taxonomy" id="9606"/>
    <lineage>
        <taxon>Eukaryota</taxon>
        <taxon>Metazoa</taxon>
        <taxon>Chordata</taxon>
        <taxon>Craniata</taxon>
        <taxon>Vertebrata</taxon>
        <taxon>Euteleostomi</taxon>
        <taxon>Mammalia</taxon>
        <taxon>Eutheria</taxon>
        <taxon>Euarchontoglires</taxon>
        <taxon>Primates</taxon>
        <taxon>Haplorrhini</taxon>
        <taxon>Catarrhini</taxon>
        <taxon>Hominidae</taxon>
        <taxon>Homo</taxon>
    </lineage>
</organism>
<dbReference type="EC" id="2.7.7.72" evidence="6 13 15 23 27"/>
<dbReference type="EMBL" id="AB063105">
    <property type="protein sequence ID" value="BAB70662.1"/>
    <property type="molecule type" value="mRNA"/>
</dbReference>
<dbReference type="EMBL" id="AF151805">
    <property type="protein sequence ID" value="AAD34042.1"/>
    <property type="status" value="ALT_FRAME"/>
    <property type="molecule type" value="mRNA"/>
</dbReference>
<dbReference type="EMBL" id="AK290411">
    <property type="protein sequence ID" value="BAF83100.1"/>
    <property type="molecule type" value="mRNA"/>
</dbReference>
<dbReference type="EMBL" id="AL834397">
    <property type="protein sequence ID" value="CAD39059.1"/>
    <property type="molecule type" value="mRNA"/>
</dbReference>
<dbReference type="EMBL" id="AC024060">
    <property type="status" value="NOT_ANNOTATED_CDS"/>
    <property type="molecule type" value="Genomic_DNA"/>
</dbReference>
<dbReference type="EMBL" id="CH471055">
    <property type="protein sequence ID" value="EAW63886.1"/>
    <property type="molecule type" value="Genomic_DNA"/>
</dbReference>
<dbReference type="EMBL" id="BC005184">
    <property type="protein sequence ID" value="AAH05184.1"/>
    <property type="molecule type" value="mRNA"/>
</dbReference>
<dbReference type="EMBL" id="BC012537">
    <property type="protein sequence ID" value="AAH12537.1"/>
    <property type="status" value="ALT_INIT"/>
    <property type="molecule type" value="mRNA"/>
</dbReference>
<dbReference type="CCDS" id="CCDS2561.2">
    <molecule id="Q96Q11-1"/>
</dbReference>
<dbReference type="CCDS" id="CCDS77691.1">
    <molecule id="Q96Q11-2"/>
</dbReference>
<dbReference type="RefSeq" id="NP_001289875.2">
    <molecule id="Q96Q11-2"/>
    <property type="nucleotide sequence ID" value="NM_001302946.2"/>
</dbReference>
<dbReference type="RefSeq" id="NP_001354250.1">
    <molecule id="Q96Q11-1"/>
    <property type="nucleotide sequence ID" value="NM_001367321.1"/>
</dbReference>
<dbReference type="RefSeq" id="NP_001354251.1">
    <molecule id="Q96Q11-1"/>
    <property type="nucleotide sequence ID" value="NM_001367322.1"/>
</dbReference>
<dbReference type="RefSeq" id="NP_001354252.1">
    <molecule id="Q96Q11-1"/>
    <property type="nucleotide sequence ID" value="NM_001367323.1"/>
</dbReference>
<dbReference type="RefSeq" id="NP_886552.3">
    <molecule id="Q96Q11-1"/>
    <property type="nucleotide sequence ID" value="NM_182916.3"/>
</dbReference>
<dbReference type="RefSeq" id="XP_011532078.1">
    <property type="nucleotide sequence ID" value="XM_011533776.2"/>
</dbReference>
<dbReference type="RefSeq" id="XP_011532079.1">
    <property type="nucleotide sequence ID" value="XM_011533777.2"/>
</dbReference>
<dbReference type="RefSeq" id="XP_011532080.1">
    <property type="nucleotide sequence ID" value="XM_011533778.2"/>
</dbReference>
<dbReference type="RefSeq" id="XP_047304196.1">
    <molecule id="Q96Q11-1"/>
    <property type="nucleotide sequence ID" value="XM_047448240.1"/>
</dbReference>
<dbReference type="RefSeq" id="XP_047304197.1">
    <molecule id="Q96Q11-1"/>
    <property type="nucleotide sequence ID" value="XM_047448241.1"/>
</dbReference>
<dbReference type="PDB" id="1OU5">
    <property type="method" value="X-ray"/>
    <property type="resolution" value="3.40 A"/>
    <property type="chains" value="A/B=30-434"/>
</dbReference>
<dbReference type="PDB" id="4X4W">
    <property type="method" value="X-ray"/>
    <property type="resolution" value="1.90 A"/>
    <property type="chains" value="A/B=28-434"/>
</dbReference>
<dbReference type="PDB" id="8CBM">
    <property type="method" value="EM"/>
    <property type="resolution" value="3.14 A"/>
    <property type="chains" value="E=42-434"/>
</dbReference>
<dbReference type="PDBsum" id="1OU5"/>
<dbReference type="PDBsum" id="4X4W"/>
<dbReference type="PDBsum" id="8CBM"/>
<dbReference type="EMDB" id="EMD-16545"/>
<dbReference type="SMR" id="Q96Q11"/>
<dbReference type="BioGRID" id="119284">
    <property type="interactions" value="62"/>
</dbReference>
<dbReference type="ComplexPortal" id="CPX-26028">
    <property type="entry name" value="Mitochondrial CCA tRNA nucleotidyltransferase 1 complex"/>
</dbReference>
<dbReference type="FunCoup" id="Q96Q11">
    <property type="interactions" value="4656"/>
</dbReference>
<dbReference type="IntAct" id="Q96Q11">
    <property type="interactions" value="20"/>
</dbReference>
<dbReference type="STRING" id="9606.ENSP00000251607"/>
<dbReference type="GlyCosmos" id="Q96Q11">
    <property type="glycosylation" value="1 site, 1 glycan"/>
</dbReference>
<dbReference type="GlyGen" id="Q96Q11">
    <property type="glycosylation" value="2 sites, 1 O-linked glycan (2 sites)"/>
</dbReference>
<dbReference type="iPTMnet" id="Q96Q11"/>
<dbReference type="PhosphoSitePlus" id="Q96Q11"/>
<dbReference type="SwissPalm" id="Q96Q11"/>
<dbReference type="BioMuta" id="TRNT1"/>
<dbReference type="DMDM" id="296452848"/>
<dbReference type="jPOST" id="Q96Q11"/>
<dbReference type="MassIVE" id="Q96Q11"/>
<dbReference type="PaxDb" id="9606-ENSP00000251607"/>
<dbReference type="PeptideAtlas" id="Q96Q11"/>
<dbReference type="ProteomicsDB" id="77807">
    <molecule id="Q96Q11-1"/>
</dbReference>
<dbReference type="ProteomicsDB" id="77808">
    <molecule id="Q96Q11-2"/>
</dbReference>
<dbReference type="ProteomicsDB" id="77809">
    <molecule id="Q96Q11-3"/>
</dbReference>
<dbReference type="Pumba" id="Q96Q11"/>
<dbReference type="Antibodypedia" id="25074">
    <property type="antibodies" value="53 antibodies from 20 providers"/>
</dbReference>
<dbReference type="DNASU" id="51095"/>
<dbReference type="Ensembl" id="ENST00000251607.11">
    <molecule id="Q96Q11-1"/>
    <property type="protein sequence ID" value="ENSP00000251607.6"/>
    <property type="gene ID" value="ENSG00000072756.18"/>
</dbReference>
<dbReference type="Ensembl" id="ENST00000280591.10">
    <molecule id="Q96Q11-2"/>
    <property type="protein sequence ID" value="ENSP00000280591.6"/>
    <property type="gene ID" value="ENSG00000072756.18"/>
</dbReference>
<dbReference type="Ensembl" id="ENST00000339437.11">
    <molecule id="Q96Q11-3"/>
    <property type="protein sequence ID" value="ENSP00000342985.6"/>
    <property type="gene ID" value="ENSG00000072756.18"/>
</dbReference>
<dbReference type="Ensembl" id="ENST00000402675.5">
    <molecule id="Q96Q11-3"/>
    <property type="protein sequence ID" value="ENSP00000385745.1"/>
    <property type="gene ID" value="ENSG00000072756.18"/>
</dbReference>
<dbReference type="Ensembl" id="ENST00000420393.5">
    <molecule id="Q96Q11-3"/>
    <property type="protein sequence ID" value="ENSP00000400394.1"/>
    <property type="gene ID" value="ENSG00000072756.18"/>
</dbReference>
<dbReference type="Ensembl" id="ENST00000434583.5">
    <molecule id="Q96Q11-1"/>
    <property type="protein sequence ID" value="ENSP00000415100.1"/>
    <property type="gene ID" value="ENSG00000072756.18"/>
</dbReference>
<dbReference type="Ensembl" id="ENST00000698406.1">
    <molecule id="Q96Q11-1"/>
    <property type="protein sequence ID" value="ENSP00000513700.1"/>
    <property type="gene ID" value="ENSG00000072756.18"/>
</dbReference>
<dbReference type="Ensembl" id="ENST00000698408.1">
    <molecule id="Q96Q11-1"/>
    <property type="protein sequence ID" value="ENSP00000513701.1"/>
    <property type="gene ID" value="ENSG00000072756.18"/>
</dbReference>
<dbReference type="Ensembl" id="ENST00000698412.1">
    <molecule id="Q96Q11-1"/>
    <property type="protein sequence ID" value="ENSP00000513705.1"/>
    <property type="gene ID" value="ENSG00000072756.18"/>
</dbReference>
<dbReference type="GeneID" id="51095"/>
<dbReference type="KEGG" id="hsa:51095"/>
<dbReference type="MANE-Select" id="ENST00000251607.11">
    <property type="protein sequence ID" value="ENSP00000251607.6"/>
    <property type="RefSeq nucleotide sequence ID" value="NM_182916.3"/>
    <property type="RefSeq protein sequence ID" value="NP_886552.3"/>
</dbReference>
<dbReference type="UCSC" id="uc003bpn.2">
    <molecule id="Q96Q11-1"/>
    <property type="organism name" value="human"/>
</dbReference>
<dbReference type="AGR" id="HGNC:17341"/>
<dbReference type="CTD" id="51095"/>
<dbReference type="DisGeNET" id="51095"/>
<dbReference type="GeneCards" id="TRNT1"/>
<dbReference type="HGNC" id="HGNC:17341">
    <property type="gene designation" value="TRNT1"/>
</dbReference>
<dbReference type="HPA" id="ENSG00000072756">
    <property type="expression patterns" value="Low tissue specificity"/>
</dbReference>
<dbReference type="MalaCards" id="TRNT1"/>
<dbReference type="MIM" id="612907">
    <property type="type" value="gene"/>
</dbReference>
<dbReference type="MIM" id="616084">
    <property type="type" value="phenotype"/>
</dbReference>
<dbReference type="MIM" id="616959">
    <property type="type" value="phenotype"/>
</dbReference>
<dbReference type="neXtProt" id="NX_Q96Q11"/>
<dbReference type="OpenTargets" id="ENSG00000072756"/>
<dbReference type="Orphanet" id="369861">
    <property type="disease" value="Congenital sideroblastic anemia-B-cell immunodeficiency-periodic fever-developmental delay syndrome"/>
</dbReference>
<dbReference type="PharmGKB" id="PA38446"/>
<dbReference type="VEuPathDB" id="HostDB:ENSG00000072756"/>
<dbReference type="eggNOG" id="KOG2159">
    <property type="taxonomic scope" value="Eukaryota"/>
</dbReference>
<dbReference type="GeneTree" id="ENSGT00390000009678"/>
<dbReference type="HOGENOM" id="CLU_206721_0_0_1"/>
<dbReference type="InParanoid" id="Q96Q11"/>
<dbReference type="OMA" id="NLCPKPM"/>
<dbReference type="OrthoDB" id="445712at2759"/>
<dbReference type="PAN-GO" id="Q96Q11">
    <property type="GO annotations" value="5 GO annotations based on evolutionary models"/>
</dbReference>
<dbReference type="PhylomeDB" id="Q96Q11"/>
<dbReference type="TreeFam" id="TF313253"/>
<dbReference type="BRENDA" id="2.7.7.72">
    <property type="organism ID" value="2681"/>
</dbReference>
<dbReference type="PathwayCommons" id="Q96Q11"/>
<dbReference type="Reactome" id="R-HSA-6784531">
    <property type="pathway name" value="tRNA processing in the nucleus"/>
</dbReference>
<dbReference type="Reactome" id="R-HSA-6785470">
    <property type="pathway name" value="tRNA processing in the mitochondrion"/>
</dbReference>
<dbReference type="SignaLink" id="Q96Q11"/>
<dbReference type="BioGRID-ORCS" id="51095">
    <property type="hits" value="772 hits in 1182 CRISPR screens"/>
</dbReference>
<dbReference type="ChiTaRS" id="TRNT1">
    <property type="organism name" value="human"/>
</dbReference>
<dbReference type="EvolutionaryTrace" id="Q96Q11"/>
<dbReference type="GeneWiki" id="TRNT1"/>
<dbReference type="GenomeRNAi" id="51095"/>
<dbReference type="Pharos" id="Q96Q11">
    <property type="development level" value="Tbio"/>
</dbReference>
<dbReference type="PRO" id="PR:Q96Q11"/>
<dbReference type="Proteomes" id="UP000005640">
    <property type="component" value="Chromosome 3"/>
</dbReference>
<dbReference type="RNAct" id="Q96Q11">
    <property type="molecule type" value="protein"/>
</dbReference>
<dbReference type="Bgee" id="ENSG00000072756">
    <property type="expression patterns" value="Expressed in endothelial cell and 184 other cell types or tissues"/>
</dbReference>
<dbReference type="ExpressionAtlas" id="Q96Q11">
    <property type="expression patterns" value="baseline and differential"/>
</dbReference>
<dbReference type="GO" id="GO:0005829">
    <property type="term" value="C:cytosol"/>
    <property type="evidence" value="ECO:0000314"/>
    <property type="project" value="UniProtKB"/>
</dbReference>
<dbReference type="GO" id="GO:0005759">
    <property type="term" value="C:mitochondrial matrix"/>
    <property type="evidence" value="ECO:0000304"/>
    <property type="project" value="Reactome"/>
</dbReference>
<dbReference type="GO" id="GO:0005739">
    <property type="term" value="C:mitochondrion"/>
    <property type="evidence" value="ECO:0000314"/>
    <property type="project" value="HPA"/>
</dbReference>
<dbReference type="GO" id="GO:0005654">
    <property type="term" value="C:nucleoplasm"/>
    <property type="evidence" value="ECO:0000304"/>
    <property type="project" value="Reactome"/>
</dbReference>
<dbReference type="GO" id="GO:0005634">
    <property type="term" value="C:nucleus"/>
    <property type="evidence" value="ECO:0000314"/>
    <property type="project" value="UniProtKB"/>
</dbReference>
<dbReference type="GO" id="GO:0034062">
    <property type="term" value="F:5'-3' RNA polymerase activity"/>
    <property type="evidence" value="ECO:0000304"/>
    <property type="project" value="Reactome"/>
</dbReference>
<dbReference type="GO" id="GO:0005524">
    <property type="term" value="F:ATP binding"/>
    <property type="evidence" value="ECO:0000304"/>
    <property type="project" value="UniProtKB"/>
</dbReference>
<dbReference type="GO" id="GO:0004810">
    <property type="term" value="F:CCA tRNA nucleotidyltransferase activity"/>
    <property type="evidence" value="ECO:0000314"/>
    <property type="project" value="UniProtKB"/>
</dbReference>
<dbReference type="GO" id="GO:0160016">
    <property type="term" value="F:CCACCA tRNA nucleotidyltransferase activity"/>
    <property type="evidence" value="ECO:0000314"/>
    <property type="project" value="UniProtKB"/>
</dbReference>
<dbReference type="GO" id="GO:0046872">
    <property type="term" value="F:metal ion binding"/>
    <property type="evidence" value="ECO:0007669"/>
    <property type="project" value="UniProtKB-KW"/>
</dbReference>
<dbReference type="GO" id="GO:0042803">
    <property type="term" value="F:protein homodimerization activity"/>
    <property type="evidence" value="ECO:0000314"/>
    <property type="project" value="UniProtKB"/>
</dbReference>
<dbReference type="GO" id="GO:0000049">
    <property type="term" value="F:tRNA binding"/>
    <property type="evidence" value="ECO:0000314"/>
    <property type="project" value="UniProtKB"/>
</dbReference>
<dbReference type="GO" id="GO:1990180">
    <property type="term" value="P:mitochondrial tRNA 3'-end processing"/>
    <property type="evidence" value="ECO:0000314"/>
    <property type="project" value="UniProtKB"/>
</dbReference>
<dbReference type="GO" id="GO:0072344">
    <property type="term" value="P:rescue of stalled ribosome"/>
    <property type="evidence" value="ECO:0000314"/>
    <property type="project" value="UniProt"/>
</dbReference>
<dbReference type="GO" id="GO:0042780">
    <property type="term" value="P:tRNA 3'-end processing"/>
    <property type="evidence" value="ECO:0000304"/>
    <property type="project" value="Reactome"/>
</dbReference>
<dbReference type="GO" id="GO:0001680">
    <property type="term" value="P:tRNA 3'-terminal CCA addition"/>
    <property type="evidence" value="ECO:0000314"/>
    <property type="project" value="UniProtKB"/>
</dbReference>
<dbReference type="GO" id="GO:0106354">
    <property type="term" value="P:tRNA surveillance"/>
    <property type="evidence" value="ECO:0000314"/>
    <property type="project" value="UniProtKB"/>
</dbReference>
<dbReference type="CDD" id="cd05398">
    <property type="entry name" value="NT_ClassII-CCAase"/>
    <property type="match status" value="1"/>
</dbReference>
<dbReference type="DisProt" id="DP02803"/>
<dbReference type="FunFam" id="1.10.3090.10:FF:000004">
    <property type="entry name" value="CCA tRNA nucleotidyltransferase 1, mitochondrial"/>
    <property type="match status" value="1"/>
</dbReference>
<dbReference type="FunFam" id="3.30.460.10:FF:000023">
    <property type="entry name" value="CCA tRNA nucleotidyltransferase 1, mitochondrial"/>
    <property type="match status" value="1"/>
</dbReference>
<dbReference type="Gene3D" id="3.30.460.10">
    <property type="entry name" value="Beta Polymerase, domain 2"/>
    <property type="match status" value="1"/>
</dbReference>
<dbReference type="Gene3D" id="1.10.3090.10">
    <property type="entry name" value="cca-adding enzyme, domain 2"/>
    <property type="match status" value="1"/>
</dbReference>
<dbReference type="InterPro" id="IPR050264">
    <property type="entry name" value="Bact_CCA-adding_enz_type3_sf"/>
</dbReference>
<dbReference type="InterPro" id="IPR043519">
    <property type="entry name" value="NT_sf"/>
</dbReference>
<dbReference type="InterPro" id="IPR002646">
    <property type="entry name" value="PolA_pol_head_dom"/>
</dbReference>
<dbReference type="InterPro" id="IPR032828">
    <property type="entry name" value="PolyA_RNA-bd"/>
</dbReference>
<dbReference type="PANTHER" id="PTHR46173">
    <property type="entry name" value="CCA TRNA NUCLEOTIDYLTRANSFERASE 1, MITOCHONDRIAL"/>
    <property type="match status" value="1"/>
</dbReference>
<dbReference type="PANTHER" id="PTHR46173:SF1">
    <property type="entry name" value="CCA TRNA NUCLEOTIDYLTRANSFERASE 1, MITOCHONDRIAL"/>
    <property type="match status" value="1"/>
</dbReference>
<dbReference type="Pfam" id="PF01743">
    <property type="entry name" value="PolyA_pol"/>
    <property type="match status" value="1"/>
</dbReference>
<dbReference type="Pfam" id="PF12627">
    <property type="entry name" value="PolyA_pol_RNAbd"/>
    <property type="match status" value="1"/>
</dbReference>
<dbReference type="SUPFAM" id="SSF81301">
    <property type="entry name" value="Nucleotidyltransferase"/>
    <property type="match status" value="1"/>
</dbReference>
<dbReference type="SUPFAM" id="SSF81891">
    <property type="entry name" value="Poly A polymerase C-terminal region-like"/>
    <property type="match status" value="1"/>
</dbReference>
<gene>
    <name evidence="33 36" type="primary">TRNT1</name>
    <name evidence="30" type="ORF">CGI-47</name>
</gene>
<accession>Q96Q11</accession>
<accession>A8K2Z6</accession>
<accession>B7WP13</accession>
<accession>C9JKA2</accession>
<accession>Q8ND57</accession>
<accession>Q9BS97</accession>
<accession>Q9Y362</accession>
<evidence type="ECO:0000250" key="1">
    <source>
        <dbReference type="UniProtKB" id="O66728"/>
    </source>
</evidence>
<evidence type="ECO:0000250" key="2">
    <source>
        <dbReference type="UniProtKB" id="Q7SIB1"/>
    </source>
</evidence>
<evidence type="ECO:0000255" key="3"/>
<evidence type="ECO:0000269" key="4">
    <source>
    </source>
</evidence>
<evidence type="ECO:0000269" key="5">
    <source>
    </source>
</evidence>
<evidence type="ECO:0000269" key="6">
    <source>
    </source>
</evidence>
<evidence type="ECO:0000269" key="7">
    <source>
    </source>
</evidence>
<evidence type="ECO:0000269" key="8">
    <source>
    </source>
</evidence>
<evidence type="ECO:0000269" key="9">
    <source>
    </source>
</evidence>
<evidence type="ECO:0000269" key="10">
    <source>
    </source>
</evidence>
<evidence type="ECO:0000269" key="11">
    <source>
    </source>
</evidence>
<evidence type="ECO:0000269" key="12">
    <source>
    </source>
</evidence>
<evidence type="ECO:0000269" key="13">
    <source>
    </source>
</evidence>
<evidence type="ECO:0000269" key="14">
    <source>
    </source>
</evidence>
<evidence type="ECO:0000269" key="15">
    <source>
    </source>
</evidence>
<evidence type="ECO:0000269" key="16">
    <source>
    </source>
</evidence>
<evidence type="ECO:0000269" key="17">
    <source>
    </source>
</evidence>
<evidence type="ECO:0000269" key="18">
    <source>
    </source>
</evidence>
<evidence type="ECO:0000269" key="19">
    <source>
    </source>
</evidence>
<evidence type="ECO:0000269" key="20">
    <source>
    </source>
</evidence>
<evidence type="ECO:0000269" key="21">
    <source>
    </source>
</evidence>
<evidence type="ECO:0000269" key="22">
    <source>
    </source>
</evidence>
<evidence type="ECO:0000269" key="23">
    <source>
    </source>
</evidence>
<evidence type="ECO:0000269" key="24">
    <source>
    </source>
</evidence>
<evidence type="ECO:0000269" key="25">
    <source>
    </source>
</evidence>
<evidence type="ECO:0000269" key="26">
    <source>
    </source>
</evidence>
<evidence type="ECO:0000269" key="27">
    <source>
    </source>
</evidence>
<evidence type="ECO:0000269" key="28">
    <source>
    </source>
</evidence>
<evidence type="ECO:0000269" key="29">
    <source ref="6"/>
</evidence>
<evidence type="ECO:0000303" key="30">
    <source>
    </source>
</evidence>
<evidence type="ECO:0000303" key="31">
    <source>
    </source>
</evidence>
<evidence type="ECO:0000303" key="32">
    <source>
    </source>
</evidence>
<evidence type="ECO:0000303" key="33">
    <source>
    </source>
</evidence>
<evidence type="ECO:0000305" key="34"/>
<evidence type="ECO:0000305" key="35">
    <source>
    </source>
</evidence>
<evidence type="ECO:0000312" key="36">
    <source>
        <dbReference type="HGNC" id="HGNC:17341"/>
    </source>
</evidence>
<evidence type="ECO:0007744" key="37">
    <source>
        <dbReference type="PDB" id="1OU5"/>
    </source>
</evidence>
<evidence type="ECO:0007744" key="38">
    <source>
        <dbReference type="PDB" id="4X4W"/>
    </source>
</evidence>
<evidence type="ECO:0007744" key="39">
    <source>
    </source>
</evidence>
<evidence type="ECO:0007744" key="40">
    <source>
    </source>
</evidence>
<evidence type="ECO:0007829" key="41">
    <source>
        <dbReference type="PDB" id="1OU5"/>
    </source>
</evidence>
<evidence type="ECO:0007829" key="42">
    <source>
        <dbReference type="PDB" id="4X4W"/>
    </source>
</evidence>
<sequence length="434" mass="50128">MLRCLYHWHRPVLNRRWSRLCLPKQYLFTMKLQSPEFQSLFTEGLKSLTELFVKENHELRIAGGAVRDLLNGVKPQDIDFATTATPTQMKEMFQSAGIRMINNRGEKHGTITARLHEENFEITTLRIDVTTDGRHAEVEFTTDWQKDAERRDLTINSMFLGFDGTLFDYFNGYEDLKNKKVRFVGHAKQRIQEDYLRILRYFRFYGRIVDKPGDHDPETLEAIAENAKGLAGISGERIWVELKKILVGNHVNHLIHLIYDLDVAPYIGLPANASLEEFDKVSKNVDGFSPKPVTLLASLFKVQDDVTKLDLRLKIAKEEKNLGLFIVKNRKDLIKATDSSDPLKPYQDFIIDSREPDATTRVCELLKYQGEHCLLKEMQQWSIPPFPVSGHDIRKVGISSGKEIGALLQQLREQWKKSGYQMEKDELLSYIKKT</sequence>
<comment type="function">
    <text evidence="6 12 13 14 15 23 24 25 27">Nucleotidyltransferase that catalyzes the addition and repair of the essential 3'-terminal CCA sequence in tRNAs, which is necessary for the attachment of amino acids to the 3' terminus of tRNA molecules, using CTP and ATP as substrates (PubMed:11504732, PubMed:25193871, PubMed:25640237, PubMed:25652405, PubMed:29454993, PubMed:30959222, PubMed:31011209, PubMed:34023389). tRNA 3'-terminal CCA addition is required both for tRNA processing and repair (PubMed:22076379, PubMed:25640237). Promotes tRNA repair and recycling downstream of the ribosome-associated quality control (RQC) pathway by mediating addition of the tRNA 3'-terminal CCA following cleavage by ANKZF1 and repair by ELAC1 (PubMed:31011209). Also involved in tRNA surveillance by mediating tandem CCA addition to generate a CCACCA at the 3' terminus of unstable tRNAs and tRNA-like transcripts (PubMed:22076379, PubMed:25640237). While stable tRNAs receive only 3'-terminal CCA, unstable tRNAs beginning with GG are marked with CCACCA and rapidly degraded (PubMed:22076379, PubMed:25640237). The structural flexibility of RNA controls the choice between CCA versus CCACCA addition: following the first CCA addition cycle, nucleotide-binding to the active site triggers a clockwise screw motion, producing torque on the RNA (PubMed:25640237). This ejects stable RNAs, whereas unstable RNAs are refolded while bound to the enzyme and subjected to a second CCA catalytic cycle (PubMed:25640237).</text>
</comment>
<comment type="function">
    <molecule>Isoform 2</molecule>
    <text evidence="10">Adds 2 C residues (CC-) to the 3' terminus of tRNA molecules instead of a complete CCA end as isoform 1 does (in vitro).</text>
</comment>
<comment type="catalytic activity">
    <reaction evidence="6 13 14 15 23 24 27">
        <text>a tRNA precursor + 2 CTP + ATP = a tRNA with a 3' CCA end + 3 diphosphate</text>
        <dbReference type="Rhea" id="RHEA:14433"/>
        <dbReference type="Rhea" id="RHEA-COMP:10465"/>
        <dbReference type="Rhea" id="RHEA-COMP:10468"/>
        <dbReference type="ChEBI" id="CHEBI:30616"/>
        <dbReference type="ChEBI" id="CHEBI:33019"/>
        <dbReference type="ChEBI" id="CHEBI:37563"/>
        <dbReference type="ChEBI" id="CHEBI:74896"/>
        <dbReference type="ChEBI" id="CHEBI:83071"/>
        <dbReference type="EC" id="2.7.7.72"/>
    </reaction>
    <physiologicalReaction direction="left-to-right" evidence="6 13 14 15 23 24 27">
        <dbReference type="Rhea" id="RHEA:14434"/>
    </physiologicalReaction>
</comment>
<comment type="catalytic activity">
    <reaction evidence="12 14">
        <text>a tRNA with a 3' CCA end + 2 CTP + ATP = a tRNA with a 3' CCACCA end + 3 diphosphate</text>
        <dbReference type="Rhea" id="RHEA:76235"/>
        <dbReference type="Rhea" id="RHEA-COMP:10468"/>
        <dbReference type="Rhea" id="RHEA-COMP:18655"/>
        <dbReference type="ChEBI" id="CHEBI:30616"/>
        <dbReference type="ChEBI" id="CHEBI:33019"/>
        <dbReference type="ChEBI" id="CHEBI:37563"/>
        <dbReference type="ChEBI" id="CHEBI:83071"/>
        <dbReference type="ChEBI" id="CHEBI:195187"/>
    </reaction>
    <physiologicalReaction direction="left-to-right" evidence="12 14">
        <dbReference type="Rhea" id="RHEA:76236"/>
    </physiologicalReaction>
</comment>
<comment type="cofactor">
    <cofactor evidence="1">
        <name>Mg(2+)</name>
        <dbReference type="ChEBI" id="CHEBI:18420"/>
    </cofactor>
</comment>
<comment type="biophysicochemical properties">
    <kinetics>
        <KM evidence="23">0.11 uM for tRNA precursor</KM>
        <KM evidence="23">230 uM for ATP</KM>
        <KM evidence="23">3.26 uM for CTP</KM>
    </kinetics>
</comment>
<comment type="subunit">
    <text evidence="7 24">Monomer, and homodimer; disulfide-linked.</text>
</comment>
<comment type="interaction">
    <interactant intactId="EBI-25861172">
        <id>Q96Q11-3</id>
    </interactant>
    <interactant intactId="EBI-747754">
        <id>P28799</id>
        <label>GRN</label>
    </interactant>
    <organismsDiffer>false</organismsDiffer>
    <experiments>3</experiments>
</comment>
<comment type="interaction">
    <interactant intactId="EBI-25861172">
        <id>Q96Q11-3</id>
    </interactant>
    <interactant intactId="EBI-720609">
        <id>O76024</id>
        <label>WFS1</label>
    </interactant>
    <organismsDiffer>false</organismsDiffer>
    <experiments>3</experiments>
</comment>
<comment type="subcellular location">
    <subcellularLocation>
        <location evidence="5 17 35">Mitochondrion</location>
    </subcellularLocation>
    <subcellularLocation>
        <location evidence="17 35">Cytoplasm</location>
    </subcellularLocation>
    <subcellularLocation>
        <location evidence="17">Nucleus</location>
    </subcellularLocation>
</comment>
<comment type="alternative products">
    <event type="alternative splicing"/>
    <isoform>
        <id>Q96Q11-1</id>
        <name>1</name>
        <sequence type="displayed"/>
    </isoform>
    <isoform>
        <id>Q96Q11-2</id>
        <name>2</name>
        <sequence type="described" ref="VSP_008442"/>
    </isoform>
    <isoform>
        <id>Q96Q11-3</id>
        <name>3</name>
        <sequence type="described" ref="VSP_008440 VSP_008441"/>
    </isoform>
</comment>
<comment type="disease" evidence="13 15 17 18 19 20 21 22 23 24 26 28">
    <disease id="DI-04261">
        <name>Sideroblastic anemia with B-cell immunodeficiency, periodic fevers, and developmental delay</name>
        <acronym>SIFD</acronym>
        <description>An autosomal recessive disease characterized by severe sideroblastic anemia with onset in the neonatal period or infancy, recurrent periodic fevers without an infectious etiology, B-cell lymphopenia and hypogammaglobulinemia. Affected individuals show delayed psychomotor development with variable neurodegeneration. Additional variable features include sensorineural hearing loss, retinitis pigmentosa, nephrocalcinosis, and cardiomyopathy.</description>
        <dbReference type="MIM" id="616084"/>
    </disease>
    <text>The disease is caused by variants affecting the gene represented in this entry.</text>
</comment>
<comment type="disease" evidence="16">
    <disease id="DI-04725">
        <name>Retinitis pigmentosa and erythrocytic microcytosis</name>
        <acronym>RPEM</acronym>
        <description>An autosomal recessive disease characterized by retinitis pigmentosa, red blood cell microcytosis and anisocytosis with mild anemia.</description>
        <dbReference type="MIM" id="616959"/>
    </disease>
    <text>The disease is caused by variants affecting the gene represented in this entry.</text>
</comment>
<comment type="similarity">
    <text evidence="34">Belongs to the tRNA nucleotidyltransferase/poly(A) polymerase family.</text>
</comment>
<comment type="sequence caution" evidence="34">
    <conflict type="frameshift">
        <sequence resource="EMBL-CDS" id="AAD34042"/>
    </conflict>
</comment>
<comment type="sequence caution" evidence="34">
    <conflict type="erroneous initiation">
        <sequence resource="EMBL-CDS" id="AAH12537"/>
    </conflict>
    <text>Truncated N-terminus.</text>
</comment>